<reference key="1">
    <citation type="submission" date="2007-03" db="EMBL/GenBank/DDBJ databases">
        <title>Complete sequence of chromosome 1 of Burkholderia vietnamiensis G4.</title>
        <authorList>
            <consortium name="US DOE Joint Genome Institute"/>
            <person name="Copeland A."/>
            <person name="Lucas S."/>
            <person name="Lapidus A."/>
            <person name="Barry K."/>
            <person name="Detter J.C."/>
            <person name="Glavina del Rio T."/>
            <person name="Hammon N."/>
            <person name="Israni S."/>
            <person name="Dalin E."/>
            <person name="Tice H."/>
            <person name="Pitluck S."/>
            <person name="Chain P."/>
            <person name="Malfatti S."/>
            <person name="Shin M."/>
            <person name="Vergez L."/>
            <person name="Schmutz J."/>
            <person name="Larimer F."/>
            <person name="Land M."/>
            <person name="Hauser L."/>
            <person name="Kyrpides N."/>
            <person name="Tiedje J."/>
            <person name="Richardson P."/>
        </authorList>
    </citation>
    <scope>NUCLEOTIDE SEQUENCE [LARGE SCALE GENOMIC DNA]</scope>
    <source>
        <strain>G4 / LMG 22486</strain>
    </source>
</reference>
<organism>
    <name type="scientific">Burkholderia vietnamiensis (strain G4 / LMG 22486)</name>
    <name type="common">Burkholderia cepacia (strain R1808)</name>
    <dbReference type="NCBI Taxonomy" id="269482"/>
    <lineage>
        <taxon>Bacteria</taxon>
        <taxon>Pseudomonadati</taxon>
        <taxon>Pseudomonadota</taxon>
        <taxon>Betaproteobacteria</taxon>
        <taxon>Burkholderiales</taxon>
        <taxon>Burkholderiaceae</taxon>
        <taxon>Burkholderia</taxon>
        <taxon>Burkholderia cepacia complex</taxon>
    </lineage>
</organism>
<comment type="function">
    <text evidence="1">Catalyzes the anti-1,4-elimination of the C-3 phosphate and the C-6 proR hydrogen from 5-enolpyruvylshikimate-3-phosphate (EPSP) to yield chorismate, which is the branch point compound that serves as the starting substrate for the three terminal pathways of aromatic amino acid biosynthesis. This reaction introduces a second double bond into the aromatic ring system.</text>
</comment>
<comment type="catalytic activity">
    <reaction evidence="1">
        <text>5-O-(1-carboxyvinyl)-3-phosphoshikimate = chorismate + phosphate</text>
        <dbReference type="Rhea" id="RHEA:21020"/>
        <dbReference type="ChEBI" id="CHEBI:29748"/>
        <dbReference type="ChEBI" id="CHEBI:43474"/>
        <dbReference type="ChEBI" id="CHEBI:57701"/>
        <dbReference type="EC" id="4.2.3.5"/>
    </reaction>
</comment>
<comment type="cofactor">
    <cofactor evidence="1">
        <name>FMNH2</name>
        <dbReference type="ChEBI" id="CHEBI:57618"/>
    </cofactor>
    <text evidence="1">Reduced FMN (FMNH(2)).</text>
</comment>
<comment type="pathway">
    <text evidence="1">Metabolic intermediate biosynthesis; chorismate biosynthesis; chorismate from D-erythrose 4-phosphate and phosphoenolpyruvate: step 7/7.</text>
</comment>
<comment type="subunit">
    <text evidence="1">Homotetramer.</text>
</comment>
<comment type="similarity">
    <text evidence="1">Belongs to the chorismate synthase family.</text>
</comment>
<proteinExistence type="inferred from homology"/>
<feature type="chain" id="PRO_1000022470" description="Chorismate synthase">
    <location>
        <begin position="1"/>
        <end position="366"/>
    </location>
</feature>
<feature type="binding site" evidence="1">
    <location>
        <position position="48"/>
    </location>
    <ligand>
        <name>NADP(+)</name>
        <dbReference type="ChEBI" id="CHEBI:58349"/>
    </ligand>
</feature>
<feature type="binding site" evidence="1">
    <location>
        <position position="54"/>
    </location>
    <ligand>
        <name>NADP(+)</name>
        <dbReference type="ChEBI" id="CHEBI:58349"/>
    </ligand>
</feature>
<feature type="binding site" evidence="1">
    <location>
        <begin position="125"/>
        <end position="127"/>
    </location>
    <ligand>
        <name>FMN</name>
        <dbReference type="ChEBI" id="CHEBI:58210"/>
    </ligand>
</feature>
<feature type="binding site" evidence="1">
    <location>
        <begin position="238"/>
        <end position="239"/>
    </location>
    <ligand>
        <name>FMN</name>
        <dbReference type="ChEBI" id="CHEBI:58210"/>
    </ligand>
</feature>
<feature type="binding site" evidence="1">
    <location>
        <position position="278"/>
    </location>
    <ligand>
        <name>FMN</name>
        <dbReference type="ChEBI" id="CHEBI:58210"/>
    </ligand>
</feature>
<feature type="binding site" evidence="1">
    <location>
        <begin position="293"/>
        <end position="297"/>
    </location>
    <ligand>
        <name>FMN</name>
        <dbReference type="ChEBI" id="CHEBI:58210"/>
    </ligand>
</feature>
<feature type="binding site" evidence="1">
    <location>
        <position position="319"/>
    </location>
    <ligand>
        <name>FMN</name>
        <dbReference type="ChEBI" id="CHEBI:58210"/>
    </ligand>
</feature>
<dbReference type="EC" id="4.2.3.5" evidence="1"/>
<dbReference type="EMBL" id="CP000614">
    <property type="protein sequence ID" value="ABO54429.1"/>
    <property type="molecule type" value="Genomic_DNA"/>
</dbReference>
<dbReference type="SMR" id="A4JDS6"/>
<dbReference type="KEGG" id="bvi:Bcep1808_1421"/>
<dbReference type="eggNOG" id="COG0082">
    <property type="taxonomic scope" value="Bacteria"/>
</dbReference>
<dbReference type="HOGENOM" id="CLU_034547_0_2_4"/>
<dbReference type="UniPathway" id="UPA00053">
    <property type="reaction ID" value="UER00090"/>
</dbReference>
<dbReference type="Proteomes" id="UP000002287">
    <property type="component" value="Chromosome 1"/>
</dbReference>
<dbReference type="GO" id="GO:0005829">
    <property type="term" value="C:cytosol"/>
    <property type="evidence" value="ECO:0007669"/>
    <property type="project" value="TreeGrafter"/>
</dbReference>
<dbReference type="GO" id="GO:0004107">
    <property type="term" value="F:chorismate synthase activity"/>
    <property type="evidence" value="ECO:0007669"/>
    <property type="project" value="UniProtKB-UniRule"/>
</dbReference>
<dbReference type="GO" id="GO:0010181">
    <property type="term" value="F:FMN binding"/>
    <property type="evidence" value="ECO:0007669"/>
    <property type="project" value="TreeGrafter"/>
</dbReference>
<dbReference type="GO" id="GO:0008652">
    <property type="term" value="P:amino acid biosynthetic process"/>
    <property type="evidence" value="ECO:0007669"/>
    <property type="project" value="UniProtKB-KW"/>
</dbReference>
<dbReference type="GO" id="GO:0009073">
    <property type="term" value="P:aromatic amino acid family biosynthetic process"/>
    <property type="evidence" value="ECO:0007669"/>
    <property type="project" value="UniProtKB-KW"/>
</dbReference>
<dbReference type="GO" id="GO:0009423">
    <property type="term" value="P:chorismate biosynthetic process"/>
    <property type="evidence" value="ECO:0007669"/>
    <property type="project" value="UniProtKB-UniRule"/>
</dbReference>
<dbReference type="CDD" id="cd07304">
    <property type="entry name" value="Chorismate_synthase"/>
    <property type="match status" value="1"/>
</dbReference>
<dbReference type="FunFam" id="3.60.150.10:FF:000001">
    <property type="entry name" value="Chorismate synthase"/>
    <property type="match status" value="1"/>
</dbReference>
<dbReference type="Gene3D" id="3.60.150.10">
    <property type="entry name" value="Chorismate synthase AroC"/>
    <property type="match status" value="1"/>
</dbReference>
<dbReference type="HAMAP" id="MF_00300">
    <property type="entry name" value="Chorismate_synth"/>
    <property type="match status" value="1"/>
</dbReference>
<dbReference type="InterPro" id="IPR000453">
    <property type="entry name" value="Chorismate_synth"/>
</dbReference>
<dbReference type="InterPro" id="IPR035904">
    <property type="entry name" value="Chorismate_synth_AroC_sf"/>
</dbReference>
<dbReference type="InterPro" id="IPR020541">
    <property type="entry name" value="Chorismate_synthase_CS"/>
</dbReference>
<dbReference type="NCBIfam" id="TIGR00033">
    <property type="entry name" value="aroC"/>
    <property type="match status" value="1"/>
</dbReference>
<dbReference type="NCBIfam" id="NF003793">
    <property type="entry name" value="PRK05382.1"/>
    <property type="match status" value="1"/>
</dbReference>
<dbReference type="PANTHER" id="PTHR21085">
    <property type="entry name" value="CHORISMATE SYNTHASE"/>
    <property type="match status" value="1"/>
</dbReference>
<dbReference type="PANTHER" id="PTHR21085:SF0">
    <property type="entry name" value="CHORISMATE SYNTHASE"/>
    <property type="match status" value="1"/>
</dbReference>
<dbReference type="Pfam" id="PF01264">
    <property type="entry name" value="Chorismate_synt"/>
    <property type="match status" value="1"/>
</dbReference>
<dbReference type="PIRSF" id="PIRSF001456">
    <property type="entry name" value="Chorismate_synth"/>
    <property type="match status" value="1"/>
</dbReference>
<dbReference type="SUPFAM" id="SSF103263">
    <property type="entry name" value="Chorismate synthase, AroC"/>
    <property type="match status" value="1"/>
</dbReference>
<dbReference type="PROSITE" id="PS00787">
    <property type="entry name" value="CHORISMATE_SYNTHASE_1"/>
    <property type="match status" value="1"/>
</dbReference>
<dbReference type="PROSITE" id="PS00788">
    <property type="entry name" value="CHORISMATE_SYNTHASE_2"/>
    <property type="match status" value="1"/>
</dbReference>
<dbReference type="PROSITE" id="PS00789">
    <property type="entry name" value="CHORISMATE_SYNTHASE_3"/>
    <property type="match status" value="1"/>
</dbReference>
<name>AROC_BURVG</name>
<protein>
    <recommendedName>
        <fullName evidence="1">Chorismate synthase</fullName>
        <shortName evidence="1">CS</shortName>
        <ecNumber evidence="1">4.2.3.5</ecNumber>
    </recommendedName>
    <alternativeName>
        <fullName evidence="1">5-enolpyruvylshikimate-3-phosphate phospholyase</fullName>
    </alternativeName>
</protein>
<evidence type="ECO:0000255" key="1">
    <source>
        <dbReference type="HAMAP-Rule" id="MF_00300"/>
    </source>
</evidence>
<sequence>MSGNTLGTLFTVTTFGESHGPAIGCVIDGCPPGMSLTEADIQAELDRRKPGTSRHVTQRQEADEVEILSGVFEGVTTGTPIALLIRNTDQRSKDYGNIVETFRPGHADYTYWQKYGIRDYRGGGRSSARLTAPIVGAGAVAKKWLRERFGVEVRGCMSALGEIDVPFVDWSHVRENPFFAPNAAIVPELEAYMDALRKDGDSIGARIDVVASGVPVGWGEPVFDRLDADIAKAMMSINAVKGVEIGAGFASVAERGSVHGDELTPAGFVGNHAGGVLGGISTGQDVTVSIAIKPTSSIRTPRRSITKAGEEAIVETFGRHDPCVGIRATPIAESMLALVLIDHALRHRAQCGDVETSTPKIAGSAT</sequence>
<gene>
    <name evidence="1" type="primary">aroC</name>
    <name type="ordered locus">Bcep1808_1421</name>
</gene>
<keyword id="KW-0028">Amino-acid biosynthesis</keyword>
<keyword id="KW-0057">Aromatic amino acid biosynthesis</keyword>
<keyword id="KW-0274">FAD</keyword>
<keyword id="KW-0285">Flavoprotein</keyword>
<keyword id="KW-0288">FMN</keyword>
<keyword id="KW-0456">Lyase</keyword>
<keyword id="KW-0521">NADP</keyword>
<accession>A4JDS6</accession>